<name>YD025_YEAST</name>
<protein>
    <recommendedName>
        <fullName>Putative uncharacterized protein YDL025W-A</fullName>
    </recommendedName>
</protein>
<comment type="miscellaneous">
    <text evidence="1">Completely overlaps RTK1.</text>
</comment>
<comment type="caution">
    <text evidence="2">Product of a dubious gene prediction unlikely to encode a functional protein. Because of that it is not part of the S.cerevisiae S288c complete/reference proteome set.</text>
</comment>
<feature type="chain" id="PRO_0000299846" description="Putative uncharacterized protein YDL025W-A">
    <location>
        <begin position="1"/>
        <end position="34"/>
    </location>
</feature>
<proteinExistence type="uncertain"/>
<dbReference type="EMBL" id="Z74073">
    <property type="status" value="NOT_ANNOTATED_CDS"/>
    <property type="molecule type" value="Genomic_DNA"/>
</dbReference>
<dbReference type="EMBL" id="Z48432">
    <property type="status" value="NOT_ANNOTATED_CDS"/>
    <property type="molecule type" value="Genomic_DNA"/>
</dbReference>
<dbReference type="EMBL" id="AF479941">
    <property type="protein sequence ID" value="AAL79254.1"/>
    <property type="molecule type" value="Genomic_DNA"/>
</dbReference>
<dbReference type="STRING" id="4932.YDL025W-A"/>
<dbReference type="PaxDb" id="4932-YDL025W-A"/>
<dbReference type="EnsemblFungi" id="YDL025W-A_mRNA">
    <property type="protein sequence ID" value="YDL025W-A"/>
    <property type="gene ID" value="YDL025W-A"/>
</dbReference>
<dbReference type="AGR" id="SGD:S000028610"/>
<dbReference type="SGD" id="S000028610">
    <property type="gene designation" value="YDL025W-A"/>
</dbReference>
<dbReference type="HOGENOM" id="CLU_3377405_0_0_1"/>
<accession>Q8TGP7</accession>
<reference key="1">
    <citation type="journal article" date="1997" name="Nature">
        <title>The nucleotide sequence of Saccharomyces cerevisiae chromosome IV.</title>
        <authorList>
            <person name="Jacq C."/>
            <person name="Alt-Moerbe J."/>
            <person name="Andre B."/>
            <person name="Arnold W."/>
            <person name="Bahr A."/>
            <person name="Ballesta J.P.G."/>
            <person name="Bargues M."/>
            <person name="Baron L."/>
            <person name="Becker A."/>
            <person name="Biteau N."/>
            <person name="Bloecker H."/>
            <person name="Blugeon C."/>
            <person name="Boskovic J."/>
            <person name="Brandt P."/>
            <person name="Brueckner M."/>
            <person name="Buitrago M.J."/>
            <person name="Coster F."/>
            <person name="Delaveau T."/>
            <person name="del Rey F."/>
            <person name="Dujon B."/>
            <person name="Eide L.G."/>
            <person name="Garcia-Cantalejo J.M."/>
            <person name="Goffeau A."/>
            <person name="Gomez-Peris A."/>
            <person name="Granotier C."/>
            <person name="Hanemann V."/>
            <person name="Hankeln T."/>
            <person name="Hoheisel J.D."/>
            <person name="Jaeger W."/>
            <person name="Jimenez A."/>
            <person name="Jonniaux J.-L."/>
            <person name="Kraemer C."/>
            <person name="Kuester H."/>
            <person name="Laamanen P."/>
            <person name="Legros Y."/>
            <person name="Louis E.J."/>
            <person name="Moeller-Rieker S."/>
            <person name="Monnet A."/>
            <person name="Moro M."/>
            <person name="Mueller-Auer S."/>
            <person name="Nussbaumer B."/>
            <person name="Paricio N."/>
            <person name="Paulin L."/>
            <person name="Perea J."/>
            <person name="Perez-Alonso M."/>
            <person name="Perez-Ortin J.E."/>
            <person name="Pohl T.M."/>
            <person name="Prydz H."/>
            <person name="Purnelle B."/>
            <person name="Rasmussen S.W."/>
            <person name="Remacha M.A."/>
            <person name="Revuelta J.L."/>
            <person name="Rieger M."/>
            <person name="Salom D."/>
            <person name="Saluz H.P."/>
            <person name="Saiz J.E."/>
            <person name="Saren A.-M."/>
            <person name="Schaefer M."/>
            <person name="Scharfe M."/>
            <person name="Schmidt E.R."/>
            <person name="Schneider C."/>
            <person name="Scholler P."/>
            <person name="Schwarz S."/>
            <person name="Soler-Mira A."/>
            <person name="Urrestarazu L.A."/>
            <person name="Verhasselt P."/>
            <person name="Vissers S."/>
            <person name="Voet M."/>
            <person name="Volckaert G."/>
            <person name="Wagner G."/>
            <person name="Wambutt R."/>
            <person name="Wedler E."/>
            <person name="Wedler H."/>
            <person name="Woelfl S."/>
            <person name="Harris D.E."/>
            <person name="Bowman S."/>
            <person name="Brown D."/>
            <person name="Churcher C.M."/>
            <person name="Connor R."/>
            <person name="Dedman K."/>
            <person name="Gentles S."/>
            <person name="Hamlin N."/>
            <person name="Hunt S."/>
            <person name="Jones L."/>
            <person name="McDonald S."/>
            <person name="Murphy L.D."/>
            <person name="Niblett D."/>
            <person name="Odell C."/>
            <person name="Oliver K."/>
            <person name="Rajandream M.A."/>
            <person name="Richards C."/>
            <person name="Shore L."/>
            <person name="Walsh S.V."/>
            <person name="Barrell B.G."/>
            <person name="Dietrich F.S."/>
            <person name="Mulligan J.T."/>
            <person name="Allen E."/>
            <person name="Araujo R."/>
            <person name="Aviles E."/>
            <person name="Berno A."/>
            <person name="Carpenter J."/>
            <person name="Chen E."/>
            <person name="Cherry J.M."/>
            <person name="Chung E."/>
            <person name="Duncan M."/>
            <person name="Hunicke-Smith S."/>
            <person name="Hyman R.W."/>
            <person name="Komp C."/>
            <person name="Lashkari D."/>
            <person name="Lew H."/>
            <person name="Lin D."/>
            <person name="Mosedale D."/>
            <person name="Nakahara K."/>
            <person name="Namath A."/>
            <person name="Oefner P."/>
            <person name="Oh C."/>
            <person name="Petel F.X."/>
            <person name="Roberts D."/>
            <person name="Schramm S."/>
            <person name="Schroeder M."/>
            <person name="Shogren T."/>
            <person name="Shroff N."/>
            <person name="Winant A."/>
            <person name="Yelton M.A."/>
            <person name="Botstein D."/>
            <person name="Davis R.W."/>
            <person name="Johnston M."/>
            <person name="Andrews S."/>
            <person name="Brinkman R."/>
            <person name="Cooper J."/>
            <person name="Ding H."/>
            <person name="Du Z."/>
            <person name="Favello A."/>
            <person name="Fulton L."/>
            <person name="Gattung S."/>
            <person name="Greco T."/>
            <person name="Hallsworth K."/>
            <person name="Hawkins J."/>
            <person name="Hillier L.W."/>
            <person name="Jier M."/>
            <person name="Johnson D."/>
            <person name="Johnston L."/>
            <person name="Kirsten J."/>
            <person name="Kucaba T."/>
            <person name="Langston Y."/>
            <person name="Latreille P."/>
            <person name="Le T."/>
            <person name="Mardis E."/>
            <person name="Menezes S."/>
            <person name="Miller N."/>
            <person name="Nhan M."/>
            <person name="Pauley A."/>
            <person name="Peluso D."/>
            <person name="Rifkin L."/>
            <person name="Riles L."/>
            <person name="Taich A."/>
            <person name="Trevaskis E."/>
            <person name="Vignati D."/>
            <person name="Wilcox L."/>
            <person name="Wohldman P."/>
            <person name="Vaudin M."/>
            <person name="Wilson R."/>
            <person name="Waterston R."/>
            <person name="Albermann K."/>
            <person name="Hani J."/>
            <person name="Heumann K."/>
            <person name="Kleine K."/>
            <person name="Mewes H.-W."/>
            <person name="Zollner A."/>
            <person name="Zaccaria P."/>
        </authorList>
    </citation>
    <scope>NUCLEOTIDE SEQUENCE [LARGE SCALE GENOMIC DNA]</scope>
    <source>
        <strain>ATCC 204508 / S288c</strain>
    </source>
</reference>
<reference key="2">
    <citation type="journal article" date="2014" name="G3 (Bethesda)">
        <title>The reference genome sequence of Saccharomyces cerevisiae: Then and now.</title>
        <authorList>
            <person name="Engel S.R."/>
            <person name="Dietrich F.S."/>
            <person name="Fisk D.G."/>
            <person name="Binkley G."/>
            <person name="Balakrishnan R."/>
            <person name="Costanzo M.C."/>
            <person name="Dwight S.S."/>
            <person name="Hitz B.C."/>
            <person name="Karra K."/>
            <person name="Nash R.S."/>
            <person name="Weng S."/>
            <person name="Wong E.D."/>
            <person name="Lloyd P."/>
            <person name="Skrzypek M.S."/>
            <person name="Miyasato S.R."/>
            <person name="Simison M."/>
            <person name="Cherry J.M."/>
        </authorList>
    </citation>
    <scope>GENOME REANNOTATION</scope>
    <source>
        <strain>ATCC 204508 / S288c</strain>
    </source>
</reference>
<reference key="3">
    <citation type="journal article" date="2002" name="Nat. Biotechnol.">
        <title>An integrated approach for finding overlooked genes in yeast.</title>
        <authorList>
            <person name="Kumar A."/>
            <person name="Harrison P.M."/>
            <person name="Cheung K.-H."/>
            <person name="Lan N."/>
            <person name="Echols N."/>
            <person name="Bertone P."/>
            <person name="Miller P."/>
            <person name="Gerstein M.B."/>
            <person name="Snyder M."/>
        </authorList>
    </citation>
    <scope>NUCLEOTIDE SEQUENCE [GENOMIC DNA]</scope>
</reference>
<evidence type="ECO:0000305" key="1"/>
<evidence type="ECO:0000305" key="2">
    <source>
    </source>
</evidence>
<sequence>MLMILWFFNQIARCRVNFTGGDGYKPIILYHVIH</sequence>
<gene>
    <name type="ordered locus">YDL025W-A</name>
</gene>
<organism>
    <name type="scientific">Saccharomyces cerevisiae (strain ATCC 204508 / S288c)</name>
    <name type="common">Baker's yeast</name>
    <dbReference type="NCBI Taxonomy" id="559292"/>
    <lineage>
        <taxon>Eukaryota</taxon>
        <taxon>Fungi</taxon>
        <taxon>Dikarya</taxon>
        <taxon>Ascomycota</taxon>
        <taxon>Saccharomycotina</taxon>
        <taxon>Saccharomycetes</taxon>
        <taxon>Saccharomycetales</taxon>
        <taxon>Saccharomycetaceae</taxon>
        <taxon>Saccharomyces</taxon>
    </lineage>
</organism>